<sequence>MKKPLNKLEIKNLTFKNKNDDYIILKNLNLDINSDKVLFLLGSSGQGKSSLLKTILKQTDVIEGTILFNKQDIFQLNKKEWKSFLKEVSFLNQTTTSIPFETVFTNIVRSLQDYKNLFYNIFNLVSKSQKEEITSVLKELNILDKIYHRVDSLSGGQQQRVEIAKLMMQKPKIIIADEPTNFLDPNISKNIIELIIKMAKKFNSILIIVTHNVNLIHEFDSSILLIKNQEYHFYKSNKEINSNILDQVFKND</sequence>
<proteinExistence type="inferred from homology"/>
<keyword id="KW-0067">ATP-binding</keyword>
<keyword id="KW-0547">Nucleotide-binding</keyword>
<keyword id="KW-0813">Transport</keyword>
<evidence type="ECO:0000255" key="1">
    <source>
        <dbReference type="PROSITE-ProRule" id="PRU00434"/>
    </source>
</evidence>
<evidence type="ECO:0000305" key="2"/>
<name>P29_MESHY</name>
<organism>
    <name type="scientific">Mesomycoplasma hyorhinis</name>
    <name type="common">Mycoplasma hyorhinis</name>
    <dbReference type="NCBI Taxonomy" id="2100"/>
    <lineage>
        <taxon>Bacteria</taxon>
        <taxon>Bacillati</taxon>
        <taxon>Mycoplasmatota</taxon>
        <taxon>Mycoplasmoidales</taxon>
        <taxon>Metamycoplasmataceae</taxon>
        <taxon>Mesomycoplasma</taxon>
    </lineage>
</organism>
<comment type="function">
    <text>Part of a high-affinity transport system.</text>
</comment>
<comment type="similarity">
    <text evidence="2">Belongs to the ABC transporter superfamily.</text>
</comment>
<reference key="1">
    <citation type="journal article" date="1988" name="EMBO J.">
        <title>A mycoplasma high-affinity transport system and the in vitro invasiveness of mouse sarcoma cells.</title>
        <authorList>
            <person name="Dudler R."/>
            <person name="Schmidhauser C."/>
            <person name="Parish R.W."/>
            <person name="Wettenhall R.E.H."/>
            <person name="Schmidt T."/>
        </authorList>
    </citation>
    <scope>NUCLEOTIDE SEQUENCE [GENOMIC DNA]</scope>
</reference>
<accession>P15361</accession>
<dbReference type="EMBL" id="M37339">
    <property type="protein sequence ID" value="AAA25428.1"/>
    <property type="molecule type" value="Genomic_DNA"/>
</dbReference>
<dbReference type="PIR" id="S01829">
    <property type="entry name" value="S01829"/>
</dbReference>
<dbReference type="RefSeq" id="WP_014335741.1">
    <property type="nucleotide sequence ID" value="NZ_QQQU01000001.1"/>
</dbReference>
<dbReference type="SMR" id="P15361"/>
<dbReference type="PATRIC" id="fig|2100.18.peg.712"/>
<dbReference type="GO" id="GO:0005524">
    <property type="term" value="F:ATP binding"/>
    <property type="evidence" value="ECO:0007669"/>
    <property type="project" value="UniProtKB-KW"/>
</dbReference>
<dbReference type="GO" id="GO:0016887">
    <property type="term" value="F:ATP hydrolysis activity"/>
    <property type="evidence" value="ECO:0007669"/>
    <property type="project" value="InterPro"/>
</dbReference>
<dbReference type="Gene3D" id="3.40.50.300">
    <property type="entry name" value="P-loop containing nucleotide triphosphate hydrolases"/>
    <property type="match status" value="1"/>
</dbReference>
<dbReference type="InterPro" id="IPR003593">
    <property type="entry name" value="AAA+_ATPase"/>
</dbReference>
<dbReference type="InterPro" id="IPR003439">
    <property type="entry name" value="ABC_transporter-like_ATP-bd"/>
</dbReference>
<dbReference type="InterPro" id="IPR017871">
    <property type="entry name" value="ABC_transporter-like_CS"/>
</dbReference>
<dbReference type="InterPro" id="IPR050153">
    <property type="entry name" value="Metal_Ion_Import_ABC"/>
</dbReference>
<dbReference type="InterPro" id="IPR027417">
    <property type="entry name" value="P-loop_NTPase"/>
</dbReference>
<dbReference type="PANTHER" id="PTHR42734">
    <property type="entry name" value="METAL TRANSPORT SYSTEM ATP-BINDING PROTEIN TM_0124-RELATED"/>
    <property type="match status" value="1"/>
</dbReference>
<dbReference type="Pfam" id="PF00005">
    <property type="entry name" value="ABC_tran"/>
    <property type="match status" value="1"/>
</dbReference>
<dbReference type="SMART" id="SM00382">
    <property type="entry name" value="AAA"/>
    <property type="match status" value="1"/>
</dbReference>
<dbReference type="SUPFAM" id="SSF52540">
    <property type="entry name" value="P-loop containing nucleoside triphosphate hydrolases"/>
    <property type="match status" value="1"/>
</dbReference>
<dbReference type="PROSITE" id="PS00211">
    <property type="entry name" value="ABC_TRANSPORTER_1"/>
    <property type="match status" value="1"/>
</dbReference>
<dbReference type="PROSITE" id="PS50893">
    <property type="entry name" value="ABC_TRANSPORTER_2"/>
    <property type="match status" value="1"/>
</dbReference>
<feature type="chain" id="PRO_0000092680" description="Probable ABC transporter ATP-binding protein p29">
    <location>
        <begin position="1"/>
        <end position="252"/>
    </location>
</feature>
<feature type="domain" description="ABC transporter" evidence="1">
    <location>
        <begin position="8"/>
        <end position="252"/>
    </location>
</feature>
<feature type="binding site" evidence="1">
    <location>
        <begin position="42"/>
        <end position="49"/>
    </location>
    <ligand>
        <name>ATP</name>
        <dbReference type="ChEBI" id="CHEBI:30616"/>
    </ligand>
</feature>
<protein>
    <recommendedName>
        <fullName>Probable ABC transporter ATP-binding protein p29</fullName>
    </recommendedName>
</protein>